<dbReference type="EC" id="4.1.1.19" evidence="1"/>
<dbReference type="EMBL" id="BA000045">
    <property type="protein sequence ID" value="BAC92011.1"/>
    <property type="molecule type" value="Genomic_DNA"/>
</dbReference>
<dbReference type="RefSeq" id="NP_927016.1">
    <property type="nucleotide sequence ID" value="NC_005125.1"/>
</dbReference>
<dbReference type="RefSeq" id="WP_011144058.1">
    <property type="nucleotide sequence ID" value="NC_005125.1"/>
</dbReference>
<dbReference type="SMR" id="Q7NE10"/>
<dbReference type="STRING" id="251221.gene:10761588"/>
<dbReference type="EnsemblBacteria" id="BAC92011">
    <property type="protein sequence ID" value="BAC92011"/>
    <property type="gene ID" value="BAC92011"/>
</dbReference>
<dbReference type="KEGG" id="gvi:gll4070"/>
<dbReference type="PATRIC" id="fig|251221.4.peg.4102"/>
<dbReference type="eggNOG" id="COG1166">
    <property type="taxonomic scope" value="Bacteria"/>
</dbReference>
<dbReference type="HOGENOM" id="CLU_027243_1_0_3"/>
<dbReference type="InParanoid" id="Q7NE10"/>
<dbReference type="OrthoDB" id="9802658at2"/>
<dbReference type="PhylomeDB" id="Q7NE10"/>
<dbReference type="Proteomes" id="UP000000557">
    <property type="component" value="Chromosome"/>
</dbReference>
<dbReference type="GO" id="GO:0008792">
    <property type="term" value="F:arginine decarboxylase activity"/>
    <property type="evidence" value="ECO:0007669"/>
    <property type="project" value="UniProtKB-UniRule"/>
</dbReference>
<dbReference type="GO" id="GO:0046872">
    <property type="term" value="F:metal ion binding"/>
    <property type="evidence" value="ECO:0007669"/>
    <property type="project" value="UniProtKB-KW"/>
</dbReference>
<dbReference type="GO" id="GO:0006527">
    <property type="term" value="P:arginine catabolic process"/>
    <property type="evidence" value="ECO:0007669"/>
    <property type="project" value="InterPro"/>
</dbReference>
<dbReference type="GO" id="GO:0008295">
    <property type="term" value="P:spermidine biosynthetic process"/>
    <property type="evidence" value="ECO:0007669"/>
    <property type="project" value="UniProtKB-UniRule"/>
</dbReference>
<dbReference type="CDD" id="cd06830">
    <property type="entry name" value="PLPDE_III_ADC"/>
    <property type="match status" value="1"/>
</dbReference>
<dbReference type="FunFam" id="1.10.287.3440:FF:000001">
    <property type="entry name" value="Biosynthetic arginine decarboxylase"/>
    <property type="match status" value="1"/>
</dbReference>
<dbReference type="FunFam" id="1.20.58.930:FF:000002">
    <property type="entry name" value="Biosynthetic arginine decarboxylase"/>
    <property type="match status" value="1"/>
</dbReference>
<dbReference type="FunFam" id="3.20.20.10:FF:000001">
    <property type="entry name" value="Biosynthetic arginine decarboxylase"/>
    <property type="match status" value="1"/>
</dbReference>
<dbReference type="Gene3D" id="1.10.287.3440">
    <property type="match status" value="1"/>
</dbReference>
<dbReference type="Gene3D" id="1.20.58.930">
    <property type="match status" value="1"/>
</dbReference>
<dbReference type="Gene3D" id="3.20.20.10">
    <property type="entry name" value="Alanine racemase"/>
    <property type="match status" value="1"/>
</dbReference>
<dbReference type="Gene3D" id="2.40.37.10">
    <property type="entry name" value="Lyase, Ornithine Decarboxylase, Chain A, domain 1"/>
    <property type="match status" value="1"/>
</dbReference>
<dbReference type="HAMAP" id="MF_01417">
    <property type="entry name" value="SpeA"/>
    <property type="match status" value="1"/>
</dbReference>
<dbReference type="InterPro" id="IPR009006">
    <property type="entry name" value="Ala_racemase/Decarboxylase_C"/>
</dbReference>
<dbReference type="InterPro" id="IPR040634">
    <property type="entry name" value="Arg_decarb_HB"/>
</dbReference>
<dbReference type="InterPro" id="IPR041128">
    <property type="entry name" value="Arg_decarbox_C"/>
</dbReference>
<dbReference type="InterPro" id="IPR002985">
    <property type="entry name" value="Arg_decrbxlase"/>
</dbReference>
<dbReference type="InterPro" id="IPR022644">
    <property type="entry name" value="De-COase2_N"/>
</dbReference>
<dbReference type="InterPro" id="IPR022653">
    <property type="entry name" value="De-COase2_pyr-phos_BS"/>
</dbReference>
<dbReference type="InterPro" id="IPR000183">
    <property type="entry name" value="Orn/DAP/Arg_de-COase"/>
</dbReference>
<dbReference type="InterPro" id="IPR029066">
    <property type="entry name" value="PLP-binding_barrel"/>
</dbReference>
<dbReference type="NCBIfam" id="NF003763">
    <property type="entry name" value="PRK05354.1"/>
    <property type="match status" value="1"/>
</dbReference>
<dbReference type="NCBIfam" id="TIGR01273">
    <property type="entry name" value="speA"/>
    <property type="match status" value="1"/>
</dbReference>
<dbReference type="PANTHER" id="PTHR43295">
    <property type="entry name" value="ARGININE DECARBOXYLASE"/>
    <property type="match status" value="1"/>
</dbReference>
<dbReference type="PANTHER" id="PTHR43295:SF9">
    <property type="entry name" value="BIOSYNTHETIC ARGININE DECARBOXYLASE"/>
    <property type="match status" value="1"/>
</dbReference>
<dbReference type="Pfam" id="PF17810">
    <property type="entry name" value="Arg_decarb_HB"/>
    <property type="match status" value="1"/>
</dbReference>
<dbReference type="Pfam" id="PF17944">
    <property type="entry name" value="Arg_decarbox_C"/>
    <property type="match status" value="1"/>
</dbReference>
<dbReference type="Pfam" id="PF02784">
    <property type="entry name" value="Orn_Arg_deC_N"/>
    <property type="match status" value="1"/>
</dbReference>
<dbReference type="PIRSF" id="PIRSF001336">
    <property type="entry name" value="Arg_decrbxlase"/>
    <property type="match status" value="1"/>
</dbReference>
<dbReference type="PRINTS" id="PR01180">
    <property type="entry name" value="ARGDCRBXLASE"/>
</dbReference>
<dbReference type="PRINTS" id="PR01179">
    <property type="entry name" value="ODADCRBXLASE"/>
</dbReference>
<dbReference type="SUPFAM" id="SSF50621">
    <property type="entry name" value="Alanine racemase C-terminal domain-like"/>
    <property type="match status" value="1"/>
</dbReference>
<dbReference type="SUPFAM" id="SSF51419">
    <property type="entry name" value="PLP-binding barrel"/>
    <property type="match status" value="1"/>
</dbReference>
<dbReference type="PROSITE" id="PS00878">
    <property type="entry name" value="ODR_DC_2_1"/>
    <property type="match status" value="1"/>
</dbReference>
<sequence>MQDWTIEDSAELYQIHGWGEPYFKINDKGHVAVMPRGEGNGEIDLFHLVQDIQKRGLNMPMLIRFSDILADRIARLNACFVEAIREYDYPGIYKGVYPVKVNQQRHVVEEVVEFGRPFQYGLEAGSKPELLIALATLKTPGALIICNGYKDSEYIETALLAQRLGHTPFVVIERFHELTLLIEAAQKLGIRPLIGVRAKLTARGIGRWGDSTGDRAKFGLSAGEIMEVVAQLKAADLLSSLQLLHFHIGSQISAINVIKTALREASCVYVELAQMGAPMQYCDVGGGLAIDYDGSKTNFRASKNYNMQEYAYDVVAAFQDACRTKNVPVPTLVSESGRAITSHQSVLVFDVMGVSHLQFGEPEPPARNEHSIIRNLYETYTQITPDNVQEAFNDASQFKEEALSLFALGYLGLGERARAERLYWGCCEKILNLVRELDYIPDELADLEKNMASTYYCNFSVFQSAPDSWAIDQLFPIMPIHRLDEEPKARGTLADLTCDSDGKIDQFIDLRDVKGVLELHPVRPEEPYYLGMFLNGAYQEILGDMHNLFGDTNTVHIHLASDEPGEQSYRLEHVVKGDTMTEVLKYVQYDHEAMLESIRRETEQALRERRITLSESRLLLQHYERSLSGYTYLTNELQVELAAR</sequence>
<comment type="function">
    <text evidence="1">Catalyzes the biosynthesis of agmatine from arginine.</text>
</comment>
<comment type="catalytic activity">
    <reaction evidence="1">
        <text>L-arginine + H(+) = agmatine + CO2</text>
        <dbReference type="Rhea" id="RHEA:17641"/>
        <dbReference type="ChEBI" id="CHEBI:15378"/>
        <dbReference type="ChEBI" id="CHEBI:16526"/>
        <dbReference type="ChEBI" id="CHEBI:32682"/>
        <dbReference type="ChEBI" id="CHEBI:58145"/>
        <dbReference type="EC" id="4.1.1.19"/>
    </reaction>
</comment>
<comment type="cofactor">
    <cofactor evidence="1">
        <name>Mg(2+)</name>
        <dbReference type="ChEBI" id="CHEBI:18420"/>
    </cofactor>
</comment>
<comment type="cofactor">
    <cofactor evidence="1">
        <name>pyridoxal 5'-phosphate</name>
        <dbReference type="ChEBI" id="CHEBI:597326"/>
    </cofactor>
</comment>
<comment type="similarity">
    <text evidence="1">Belongs to the Orn/Lys/Arg decarboxylase class-II family. SpeA subfamily.</text>
</comment>
<evidence type="ECO:0000255" key="1">
    <source>
        <dbReference type="HAMAP-Rule" id="MF_01417"/>
    </source>
</evidence>
<reference key="1">
    <citation type="journal article" date="2003" name="DNA Res.">
        <title>Complete genome structure of Gloeobacter violaceus PCC 7421, a cyanobacterium that lacks thylakoids.</title>
        <authorList>
            <person name="Nakamura Y."/>
            <person name="Kaneko T."/>
            <person name="Sato S."/>
            <person name="Mimuro M."/>
            <person name="Miyashita H."/>
            <person name="Tsuchiya T."/>
            <person name="Sasamoto S."/>
            <person name="Watanabe A."/>
            <person name="Kawashima K."/>
            <person name="Kishida Y."/>
            <person name="Kiyokawa C."/>
            <person name="Kohara M."/>
            <person name="Matsumoto M."/>
            <person name="Matsuno A."/>
            <person name="Nakazaki N."/>
            <person name="Shimpo S."/>
            <person name="Takeuchi C."/>
            <person name="Yamada M."/>
            <person name="Tabata S."/>
        </authorList>
    </citation>
    <scope>NUCLEOTIDE SEQUENCE [LARGE SCALE GENOMIC DNA]</scope>
    <source>
        <strain>ATCC 29082 / PCC 7421</strain>
    </source>
</reference>
<keyword id="KW-0210">Decarboxylase</keyword>
<keyword id="KW-0456">Lyase</keyword>
<keyword id="KW-0460">Magnesium</keyword>
<keyword id="KW-0479">Metal-binding</keyword>
<keyword id="KW-0620">Polyamine biosynthesis</keyword>
<keyword id="KW-0663">Pyridoxal phosphate</keyword>
<keyword id="KW-1185">Reference proteome</keyword>
<keyword id="KW-0745">Spermidine biosynthesis</keyword>
<proteinExistence type="inferred from homology"/>
<feature type="chain" id="PRO_0000149963" description="Biosynthetic arginine decarboxylase">
    <location>
        <begin position="1"/>
        <end position="644"/>
    </location>
</feature>
<feature type="binding site" evidence="1">
    <location>
        <begin position="282"/>
        <end position="292"/>
    </location>
    <ligand>
        <name>substrate</name>
    </ligand>
</feature>
<feature type="modified residue" description="N6-(pyridoxal phosphate)lysine" evidence="1">
    <location>
        <position position="100"/>
    </location>
</feature>
<protein>
    <recommendedName>
        <fullName evidence="1">Biosynthetic arginine decarboxylase</fullName>
        <shortName evidence="1">ADC</shortName>
        <ecNumber evidence="1">4.1.1.19</ecNumber>
    </recommendedName>
</protein>
<name>SPEA_GLOVI</name>
<organism>
    <name type="scientific">Gloeobacter violaceus (strain ATCC 29082 / PCC 7421)</name>
    <dbReference type="NCBI Taxonomy" id="251221"/>
    <lineage>
        <taxon>Bacteria</taxon>
        <taxon>Bacillati</taxon>
        <taxon>Cyanobacteriota</taxon>
        <taxon>Cyanophyceae</taxon>
        <taxon>Gloeobacterales</taxon>
        <taxon>Gloeobacteraceae</taxon>
        <taxon>Gloeobacter</taxon>
    </lineage>
</organism>
<gene>
    <name evidence="1" type="primary">speA</name>
    <name type="ordered locus">gll4070</name>
</gene>
<accession>Q7NE10</accession>